<keyword id="KW-0963">Cytoplasm</keyword>
<keyword id="KW-0441">Lipid A biosynthesis</keyword>
<keyword id="KW-0444">Lipid biosynthesis</keyword>
<keyword id="KW-0443">Lipid metabolism</keyword>
<keyword id="KW-0456">Lyase</keyword>
<comment type="function">
    <text evidence="1">Involved in unsaturated fatty acids biosynthesis. Catalyzes the dehydration of short chain beta-hydroxyacyl-ACPs and long chain saturated and unsaturated beta-hydroxyacyl-ACPs.</text>
</comment>
<comment type="catalytic activity">
    <reaction evidence="1">
        <text>a (3R)-hydroxyacyl-[ACP] = a (2E)-enoyl-[ACP] + H2O</text>
        <dbReference type="Rhea" id="RHEA:13097"/>
        <dbReference type="Rhea" id="RHEA-COMP:9925"/>
        <dbReference type="Rhea" id="RHEA-COMP:9945"/>
        <dbReference type="ChEBI" id="CHEBI:15377"/>
        <dbReference type="ChEBI" id="CHEBI:78784"/>
        <dbReference type="ChEBI" id="CHEBI:78827"/>
        <dbReference type="EC" id="4.2.1.59"/>
    </reaction>
</comment>
<comment type="subcellular location">
    <subcellularLocation>
        <location evidence="1">Cytoplasm</location>
    </subcellularLocation>
</comment>
<comment type="similarity">
    <text evidence="1">Belongs to the thioester dehydratase family. FabZ subfamily.</text>
</comment>
<sequence>MIDVMQIQEILPHRYPFLLVDKITELKVKEVVLGYKNISISDHVFMGHFPGHPIYPGVLILEGMAQTGGVLAFESMEDKVDPKSKVVYFTGIDGAKFRNPVRPGDRLDYEMSVVKNRGNMWIFKGQAFVDGNLVAEAELKAMIVDK</sequence>
<name>FABZ_CAMJ8</name>
<protein>
    <recommendedName>
        <fullName evidence="1">3-hydroxyacyl-[acyl-carrier-protein] dehydratase FabZ</fullName>
        <ecNumber evidence="1">4.2.1.59</ecNumber>
    </recommendedName>
    <alternativeName>
        <fullName evidence="1">(3R)-hydroxymyristoyl-[acyl-carrier-protein] dehydratase</fullName>
        <shortName evidence="1">(3R)-hydroxymyristoyl-ACP dehydrase</shortName>
    </alternativeName>
    <alternativeName>
        <fullName evidence="1">Beta-hydroxyacyl-ACP dehydratase</fullName>
    </alternativeName>
</protein>
<proteinExistence type="inferred from homology"/>
<organism>
    <name type="scientific">Campylobacter jejuni subsp. jejuni serotype O:6 (strain 81116 / NCTC 11828)</name>
    <dbReference type="NCBI Taxonomy" id="407148"/>
    <lineage>
        <taxon>Bacteria</taxon>
        <taxon>Pseudomonadati</taxon>
        <taxon>Campylobacterota</taxon>
        <taxon>Epsilonproteobacteria</taxon>
        <taxon>Campylobacterales</taxon>
        <taxon>Campylobacteraceae</taxon>
        <taxon>Campylobacter</taxon>
    </lineage>
</organism>
<reference key="1">
    <citation type="journal article" date="2007" name="J. Bacteriol.">
        <title>The complete genome sequence of Campylobacter jejuni strain 81116 (NCTC11828).</title>
        <authorList>
            <person name="Pearson B.M."/>
            <person name="Gaskin D.J.H."/>
            <person name="Segers R.P.A.M."/>
            <person name="Wells J.M."/>
            <person name="Nuijten P.J.M."/>
            <person name="van Vliet A.H.M."/>
        </authorList>
    </citation>
    <scope>NUCLEOTIDE SEQUENCE [LARGE SCALE GENOMIC DNA]</scope>
    <source>
        <strain>81116 / NCTC 11828</strain>
    </source>
</reference>
<evidence type="ECO:0000255" key="1">
    <source>
        <dbReference type="HAMAP-Rule" id="MF_00406"/>
    </source>
</evidence>
<feature type="chain" id="PRO_1000072267" description="3-hydroxyacyl-[acyl-carrier-protein] dehydratase FabZ">
    <location>
        <begin position="1"/>
        <end position="146"/>
    </location>
</feature>
<feature type="active site" evidence="1">
    <location>
        <position position="48"/>
    </location>
</feature>
<gene>
    <name evidence="1" type="primary">fabZ</name>
    <name type="ordered locus">C8J_0250</name>
</gene>
<accession>A8FK62</accession>
<dbReference type="EC" id="4.2.1.59" evidence="1"/>
<dbReference type="EMBL" id="CP000814">
    <property type="protein sequence ID" value="ABV51849.1"/>
    <property type="molecule type" value="Genomic_DNA"/>
</dbReference>
<dbReference type="RefSeq" id="WP_002857452.1">
    <property type="nucleotide sequence ID" value="NC_009839.1"/>
</dbReference>
<dbReference type="SMR" id="A8FK62"/>
<dbReference type="KEGG" id="cju:C8J_0250"/>
<dbReference type="HOGENOM" id="CLU_078912_1_2_7"/>
<dbReference type="GO" id="GO:0005737">
    <property type="term" value="C:cytoplasm"/>
    <property type="evidence" value="ECO:0007669"/>
    <property type="project" value="UniProtKB-SubCell"/>
</dbReference>
<dbReference type="GO" id="GO:0016020">
    <property type="term" value="C:membrane"/>
    <property type="evidence" value="ECO:0007669"/>
    <property type="project" value="GOC"/>
</dbReference>
<dbReference type="GO" id="GO:0019171">
    <property type="term" value="F:(3R)-hydroxyacyl-[acyl-carrier-protein] dehydratase activity"/>
    <property type="evidence" value="ECO:0007669"/>
    <property type="project" value="UniProtKB-EC"/>
</dbReference>
<dbReference type="GO" id="GO:0006633">
    <property type="term" value="P:fatty acid biosynthetic process"/>
    <property type="evidence" value="ECO:0007669"/>
    <property type="project" value="UniProtKB-UniRule"/>
</dbReference>
<dbReference type="GO" id="GO:0009245">
    <property type="term" value="P:lipid A biosynthetic process"/>
    <property type="evidence" value="ECO:0007669"/>
    <property type="project" value="UniProtKB-UniRule"/>
</dbReference>
<dbReference type="CDD" id="cd01288">
    <property type="entry name" value="FabZ"/>
    <property type="match status" value="1"/>
</dbReference>
<dbReference type="FunFam" id="3.10.129.10:FF:000076">
    <property type="entry name" value="3-hydroxyacyl-[acyl-carrier-protein] dehydratase FabZ"/>
    <property type="match status" value="1"/>
</dbReference>
<dbReference type="Gene3D" id="3.10.129.10">
    <property type="entry name" value="Hotdog Thioesterase"/>
    <property type="match status" value="1"/>
</dbReference>
<dbReference type="HAMAP" id="MF_00406">
    <property type="entry name" value="FabZ"/>
    <property type="match status" value="1"/>
</dbReference>
<dbReference type="InterPro" id="IPR013114">
    <property type="entry name" value="FabA_FabZ"/>
</dbReference>
<dbReference type="InterPro" id="IPR010084">
    <property type="entry name" value="FabZ"/>
</dbReference>
<dbReference type="InterPro" id="IPR029069">
    <property type="entry name" value="HotDog_dom_sf"/>
</dbReference>
<dbReference type="NCBIfam" id="TIGR01750">
    <property type="entry name" value="fabZ"/>
    <property type="match status" value="1"/>
</dbReference>
<dbReference type="NCBIfam" id="NF000582">
    <property type="entry name" value="PRK00006.1"/>
    <property type="match status" value="1"/>
</dbReference>
<dbReference type="PANTHER" id="PTHR30272">
    <property type="entry name" value="3-HYDROXYACYL-[ACYL-CARRIER-PROTEIN] DEHYDRATASE"/>
    <property type="match status" value="1"/>
</dbReference>
<dbReference type="PANTHER" id="PTHR30272:SF1">
    <property type="entry name" value="3-HYDROXYACYL-[ACYL-CARRIER-PROTEIN] DEHYDRATASE"/>
    <property type="match status" value="1"/>
</dbReference>
<dbReference type="Pfam" id="PF07977">
    <property type="entry name" value="FabA"/>
    <property type="match status" value="1"/>
</dbReference>
<dbReference type="SUPFAM" id="SSF54637">
    <property type="entry name" value="Thioesterase/thiol ester dehydrase-isomerase"/>
    <property type="match status" value="1"/>
</dbReference>